<sequence length="96" mass="10365">MTAAHGYTQQKDNYAKRLRRVEGQVRGIARMIEEDKYCIDVLTQISAVTSALRSVALNLLDEHLSHCVTRAVAEGGPGADGKLAEASAAIARLVRS</sequence>
<accession>O07434</accession>
<accession>D9CH46</accession>
<accession>F2GLY8</accession>
<accession>Q7DAA9</accession>
<proteinExistence type="evidence at protein level"/>
<protein>
    <recommendedName>
        <fullName evidence="5">Copper-sensing transcriptional repressor RicR</fullName>
    </recommendedName>
    <alternativeName>
        <fullName evidence="4">Regulated in copper repressor</fullName>
    </alternativeName>
</protein>
<keyword id="KW-0007">Acetylation</keyword>
<keyword id="KW-0186">Copper</keyword>
<keyword id="KW-0963">Cytoplasm</keyword>
<keyword id="KW-0238">DNA-binding</keyword>
<keyword id="KW-0479">Metal-binding</keyword>
<keyword id="KW-1185">Reference proteome</keyword>
<keyword id="KW-0678">Repressor</keyword>
<keyword id="KW-0804">Transcription</keyword>
<keyword id="KW-0805">Transcription regulation</keyword>
<dbReference type="EMBL" id="GU726749">
    <property type="protein sequence ID" value="ADJ67803.1"/>
    <property type="molecule type" value="Genomic_DNA"/>
</dbReference>
<dbReference type="EMBL" id="AL123456">
    <property type="protein sequence ID" value="CCP42917.1"/>
    <property type="molecule type" value="Genomic_DNA"/>
</dbReference>
<dbReference type="EMBL" id="CP003248">
    <property type="protein sequence ID" value="AFN48039.1"/>
    <property type="molecule type" value="Genomic_DNA"/>
</dbReference>
<dbReference type="EMBL" id="JLDD01000001">
    <property type="protein sequence ID" value="KBJ41298.1"/>
    <property type="molecule type" value="Genomic_DNA"/>
</dbReference>
<dbReference type="RefSeq" id="NP_214704.1">
    <property type="nucleotide sequence ID" value="NC_000962.3"/>
</dbReference>
<dbReference type="RefSeq" id="WP_003401147.1">
    <property type="nucleotide sequence ID" value="NZ_NVQJ01000001.1"/>
</dbReference>
<dbReference type="SMR" id="O07434"/>
<dbReference type="FunCoup" id="O07434">
    <property type="interactions" value="12"/>
</dbReference>
<dbReference type="STRING" id="83332.Rv0190"/>
<dbReference type="iPTMnet" id="O07434"/>
<dbReference type="PaxDb" id="83332-Rv0190"/>
<dbReference type="DNASU" id="886772"/>
<dbReference type="GeneID" id="886772"/>
<dbReference type="KEGG" id="mtu:Rv0190"/>
<dbReference type="KEGG" id="mtv:RVBD_0190"/>
<dbReference type="PATRIC" id="fig|83332.111.peg.218"/>
<dbReference type="TubercuList" id="Rv0190"/>
<dbReference type="eggNOG" id="COG1937">
    <property type="taxonomic scope" value="Bacteria"/>
</dbReference>
<dbReference type="HOGENOM" id="CLU_130332_0_1_11"/>
<dbReference type="InParanoid" id="O07434"/>
<dbReference type="OrthoDB" id="9811244at2"/>
<dbReference type="PhylomeDB" id="O07434"/>
<dbReference type="PHI-base" id="PHI:4070"/>
<dbReference type="Proteomes" id="UP000001584">
    <property type="component" value="Chromosome"/>
</dbReference>
<dbReference type="GO" id="GO:0005737">
    <property type="term" value="C:cytoplasm"/>
    <property type="evidence" value="ECO:0007669"/>
    <property type="project" value="UniProtKB-SubCell"/>
</dbReference>
<dbReference type="GO" id="GO:0032993">
    <property type="term" value="C:protein-DNA complex"/>
    <property type="evidence" value="ECO:0000315"/>
    <property type="project" value="CollecTF"/>
</dbReference>
<dbReference type="GO" id="GO:0001217">
    <property type="term" value="F:DNA-binding transcription repressor activity"/>
    <property type="evidence" value="ECO:0000315"/>
    <property type="project" value="CollecTF"/>
</dbReference>
<dbReference type="GO" id="GO:0046872">
    <property type="term" value="F:metal ion binding"/>
    <property type="evidence" value="ECO:0007669"/>
    <property type="project" value="UniProtKB-KW"/>
</dbReference>
<dbReference type="GO" id="GO:0000976">
    <property type="term" value="F:transcription cis-regulatory region binding"/>
    <property type="evidence" value="ECO:0000315"/>
    <property type="project" value="CollecTF"/>
</dbReference>
<dbReference type="GO" id="GO:0045892">
    <property type="term" value="P:negative regulation of DNA-templated transcription"/>
    <property type="evidence" value="ECO:0000314"/>
    <property type="project" value="MTBBASE"/>
</dbReference>
<dbReference type="GO" id="GO:0046688">
    <property type="term" value="P:response to copper ion"/>
    <property type="evidence" value="ECO:0000314"/>
    <property type="project" value="MTBBASE"/>
</dbReference>
<dbReference type="CDD" id="cd10148">
    <property type="entry name" value="CsoR-like_DUF156"/>
    <property type="match status" value="1"/>
</dbReference>
<dbReference type="FunFam" id="1.20.58.1000:FF:000003">
    <property type="entry name" value="CopY family transcriptional regulator"/>
    <property type="match status" value="1"/>
</dbReference>
<dbReference type="Gene3D" id="1.20.58.1000">
    <property type="entry name" value="Metal-sensitive repressor, helix protomer"/>
    <property type="match status" value="1"/>
</dbReference>
<dbReference type="InterPro" id="IPR003735">
    <property type="entry name" value="Metal_Tscrpt_repr"/>
</dbReference>
<dbReference type="InterPro" id="IPR038390">
    <property type="entry name" value="Metal_Tscrpt_repr_sf"/>
</dbReference>
<dbReference type="PANTHER" id="PTHR33677:SF3">
    <property type="entry name" value="COPPER-SENSING TRANSCRIPTIONAL REPRESSOR RICR"/>
    <property type="match status" value="1"/>
</dbReference>
<dbReference type="PANTHER" id="PTHR33677">
    <property type="entry name" value="TRANSCRIPTIONAL REPRESSOR FRMR-RELATED"/>
    <property type="match status" value="1"/>
</dbReference>
<dbReference type="Pfam" id="PF02583">
    <property type="entry name" value="Trns_repr_metal"/>
    <property type="match status" value="1"/>
</dbReference>
<evidence type="ECO:0000250" key="1">
    <source>
        <dbReference type="UniProtKB" id="P9WP49"/>
    </source>
</evidence>
<evidence type="ECO:0000269" key="2">
    <source>
    </source>
</evidence>
<evidence type="ECO:0000269" key="3">
    <source>
    </source>
</evidence>
<evidence type="ECO:0000303" key="4">
    <source>
    </source>
</evidence>
<evidence type="ECO:0000305" key="5"/>
<evidence type="ECO:0000305" key="6">
    <source>
    </source>
</evidence>
<evidence type="ECO:0000312" key="7">
    <source>
        <dbReference type="EMBL" id="AFN48039.1"/>
    </source>
</evidence>
<evidence type="ECO:0000312" key="8">
    <source>
        <dbReference type="EMBL" id="CCP42917.1"/>
    </source>
</evidence>
<evidence type="ECO:0000312" key="9">
    <source>
        <dbReference type="EMBL" id="KBJ41298.1"/>
    </source>
</evidence>
<evidence type="ECO:0007744" key="10">
    <source>
    </source>
</evidence>
<organism>
    <name type="scientific">Mycobacterium tuberculosis (strain ATCC 25618 / H37Rv)</name>
    <dbReference type="NCBI Taxonomy" id="83332"/>
    <lineage>
        <taxon>Bacteria</taxon>
        <taxon>Bacillati</taxon>
        <taxon>Actinomycetota</taxon>
        <taxon>Actinomycetes</taxon>
        <taxon>Mycobacteriales</taxon>
        <taxon>Mycobacteriaceae</taxon>
        <taxon>Mycobacterium</taxon>
        <taxon>Mycobacterium tuberculosis complex</taxon>
    </lineage>
</organism>
<feature type="initiator methionine" description="Removed" evidence="10">
    <location>
        <position position="1"/>
    </location>
</feature>
<feature type="chain" id="PRO_0000433099" description="Copper-sensing transcriptional repressor RicR">
    <location>
        <begin position="2"/>
        <end position="96"/>
    </location>
</feature>
<feature type="binding site" description="in other chain" evidence="1 6">
    <location>
        <position position="38"/>
    </location>
    <ligand>
        <name>Cu cation</name>
        <dbReference type="ChEBI" id="CHEBI:23378"/>
        <note>ligand shared between dimeric partners</note>
    </ligand>
</feature>
<feature type="binding site" evidence="1">
    <location>
        <position position="63"/>
    </location>
    <ligand>
        <name>Cu cation</name>
        <dbReference type="ChEBI" id="CHEBI:23378"/>
        <note>ligand shared between dimeric partners</note>
    </ligand>
</feature>
<feature type="binding site" evidence="1">
    <location>
        <position position="67"/>
    </location>
    <ligand>
        <name>Cu cation</name>
        <dbReference type="ChEBI" id="CHEBI:23378"/>
        <note>ligand shared between dimeric partners</note>
    </ligand>
</feature>
<feature type="modified residue" description="N-acetylthreonine" evidence="10">
    <location>
        <position position="2"/>
    </location>
</feature>
<feature type="mutagenesis site" description="Unresponsive to copper." evidence="3">
    <original>C</original>
    <variation>A</variation>
    <location>
        <position position="38"/>
    </location>
</feature>
<gene>
    <name evidence="4" type="primary">ricR</name>
    <name evidence="8" type="ordered locus">Rv0190</name>
    <name evidence="7" type="ordered locus">RVBD_0190</name>
    <name evidence="9" type="ORF">P425_00198</name>
</gene>
<reference key="1">
    <citation type="journal article" date="2011" name="Mol. Microbiol.">
        <title>A novel copper-responsive regulon in Mycobacterium tuberculosis.</title>
        <authorList>
            <person name="Festa R.A."/>
            <person name="Jones M.B."/>
            <person name="Butler-Wu S."/>
            <person name="Sinsimer D."/>
            <person name="Gerads R."/>
            <person name="Bishai W.R."/>
            <person name="Peterson S.N."/>
            <person name="Darwin K.H."/>
        </authorList>
    </citation>
    <scope>NUCLEOTIDE SEQUENCE [GENOMIC DNA]</scope>
    <scope>FUNCTION AS A REPRESSOR</scope>
    <scope>INDUCTION</scope>
    <scope>DISRUPTION PHENOTYPE</scope>
    <source>
        <strain>ATCC 25618 / H37Rv</strain>
    </source>
</reference>
<reference key="2">
    <citation type="journal article" date="1998" name="Nature">
        <title>Deciphering the biology of Mycobacterium tuberculosis from the complete genome sequence.</title>
        <authorList>
            <person name="Cole S.T."/>
            <person name="Brosch R."/>
            <person name="Parkhill J."/>
            <person name="Garnier T."/>
            <person name="Churcher C.M."/>
            <person name="Harris D.E."/>
            <person name="Gordon S.V."/>
            <person name="Eiglmeier K."/>
            <person name="Gas S."/>
            <person name="Barry C.E. III"/>
            <person name="Tekaia F."/>
            <person name="Badcock K."/>
            <person name="Basham D."/>
            <person name="Brown D."/>
            <person name="Chillingworth T."/>
            <person name="Connor R."/>
            <person name="Davies R.M."/>
            <person name="Devlin K."/>
            <person name="Feltwell T."/>
            <person name="Gentles S."/>
            <person name="Hamlin N."/>
            <person name="Holroyd S."/>
            <person name="Hornsby T."/>
            <person name="Jagels K."/>
            <person name="Krogh A."/>
            <person name="McLean J."/>
            <person name="Moule S."/>
            <person name="Murphy L.D."/>
            <person name="Oliver S."/>
            <person name="Osborne J."/>
            <person name="Quail M.A."/>
            <person name="Rajandream M.A."/>
            <person name="Rogers J."/>
            <person name="Rutter S."/>
            <person name="Seeger K."/>
            <person name="Skelton S."/>
            <person name="Squares S."/>
            <person name="Squares R."/>
            <person name="Sulston J.E."/>
            <person name="Taylor K."/>
            <person name="Whitehead S."/>
            <person name="Barrell B.G."/>
        </authorList>
    </citation>
    <scope>NUCLEOTIDE SEQUENCE [LARGE SCALE GENOMIC DNA]</scope>
    <source>
        <strain>ATCC 25618 / H37Rv</strain>
    </source>
</reference>
<reference key="3">
    <citation type="submission" date="2013-11" db="EMBL/GenBank/DDBJ databases">
        <title>The genome sequence of Mycobacterium tuberculosis H37Rv.</title>
        <authorList>
            <consortium name="The Broad Institute Genome Sequencing Platform"/>
            <person name="Galagan J."/>
            <person name="Kreiswirth B."/>
            <person name="Dobos K."/>
            <person name="Fortune S."/>
            <person name="Fitzgerald M."/>
            <person name="Young S.K."/>
            <person name="Zeng Q."/>
            <person name="Gargeya S."/>
            <person name="Abouelleil A."/>
            <person name="Alvarado L."/>
            <person name="Berlin A.M."/>
            <person name="Chapman S.B."/>
            <person name="Gainer-Dewar J."/>
            <person name="Goldberg J."/>
            <person name="Gnerre S."/>
            <person name="Griggs A."/>
            <person name="Gujja S."/>
            <person name="Hansen M."/>
            <person name="Howarth C."/>
            <person name="Imamovic A."/>
            <person name="Larimer J."/>
            <person name="McCowan C."/>
            <person name="Murphy C."/>
            <person name="Pearson M."/>
            <person name="Poon T."/>
            <person name="Priest M."/>
            <person name="Roberts A."/>
            <person name="Saif S."/>
            <person name="Shea T."/>
            <person name="Sykes S."/>
            <person name="Wortman J."/>
            <person name="Nusbaum C."/>
            <person name="Birren B."/>
        </authorList>
    </citation>
    <scope>NUCLEOTIDE SEQUENCE [LARGE SCALE GENOMIC DNA]</scope>
    <source>
        <strain>ATCC 25618 / H37Rv</strain>
    </source>
</reference>
<reference key="4">
    <citation type="submission" date="2014-04" db="EMBL/GenBank/DDBJ databases">
        <title>The genome sequence of Mycobacterium tuberculosis H37Rv.</title>
        <authorList>
            <consortium name="The Broad Institute Genomics Platform"/>
            <consortium name="The Broad Institute Genome Sequencing Center for Infectious Disease"/>
            <person name="Earl A.M."/>
            <person name="Kreiswirth B."/>
            <person name="Gomez J."/>
            <person name="Victor T."/>
            <person name="Desjardins C."/>
            <person name="Abeel T."/>
            <person name="Young S."/>
            <person name="Zeng Q."/>
            <person name="Gargeya S."/>
            <person name="Abouelleil A."/>
            <person name="Alvarado L."/>
            <person name="Chapman S.B."/>
            <person name="Gainer-Dewar J."/>
            <person name="Goldberg J."/>
            <person name="Griggs A."/>
            <person name="Gujja S."/>
            <person name="Hansen M."/>
            <person name="Howarth C."/>
            <person name="Imamovic A."/>
            <person name="Larimer J."/>
            <person name="Murphy C."/>
            <person name="Naylor J."/>
            <person name="Pearson M."/>
            <person name="Poon T.W."/>
            <person name="Priest M."/>
            <person name="Roberts A."/>
            <person name="Saif S."/>
            <person name="Shea T."/>
            <person name="Sykes S."/>
            <person name="Wortman J."/>
            <person name="Nusbaum C."/>
            <person name="Birren B."/>
        </authorList>
    </citation>
    <scope>NUCLEOTIDE SEQUENCE [LARGE SCALE GENOMIC DNA]</scope>
    <source>
        <strain>ATCC 25618 / H37Rv</strain>
    </source>
</reference>
<reference key="5">
    <citation type="journal article" date="2011" name="Mol. Cell. Proteomics">
        <title>Proteogenomic analysis of Mycobacterium tuberculosis by high resolution mass spectrometry.</title>
        <authorList>
            <person name="Kelkar D.S."/>
            <person name="Kumar D."/>
            <person name="Kumar P."/>
            <person name="Balakrishnan L."/>
            <person name="Muthusamy B."/>
            <person name="Yadav A.K."/>
            <person name="Shrivastava P."/>
            <person name="Marimuthu A."/>
            <person name="Anand S."/>
            <person name="Sundaram H."/>
            <person name="Kingsbury R."/>
            <person name="Harsha H.C."/>
            <person name="Nair B."/>
            <person name="Prasad T.S."/>
            <person name="Chauhan D.S."/>
            <person name="Katoch K."/>
            <person name="Katoch V.M."/>
            <person name="Kumar P."/>
            <person name="Chaerkady R."/>
            <person name="Ramachandran S."/>
            <person name="Dash D."/>
            <person name="Pandey A."/>
        </authorList>
    </citation>
    <scope>ACETYLATION [LARGE SCALE ANALYSIS] AT THR-2</scope>
    <scope>CLEAVAGE OF INITIATOR METHIONINE [LARGE SCALE ANALYSIS]</scope>
    <scope>IDENTIFICATION BY MASS SPECTROMETRY [LARGE SCALE ANALYSIS]</scope>
    <source>
        <strain>ATCC 25618 / H37Rv</strain>
    </source>
</reference>
<reference key="6">
    <citation type="journal article" date="2014" name="MBio">
        <title>The copper-responsive RicR regulon contributes to Mycobacterium tuberculosis virulence.</title>
        <authorList>
            <person name="Shi X."/>
            <person name="Festa R.A."/>
            <person name="Ioerger T.R."/>
            <person name="Butler-Wu S."/>
            <person name="Sacchettini J.C."/>
            <person name="Darwin K.H."/>
            <person name="Samanovic M.I."/>
        </authorList>
    </citation>
    <scope>FUNCTION</scope>
    <scope>MUTAGENESIS OF CYS-38</scope>
    <source>
        <strain>ATCC 25618 / H37Rv</strain>
    </source>
</reference>
<comment type="function">
    <text evidence="2 3">Under low copper conditions, represses the expression of lpqS, Rv2963, mymT, socA, socB, mmcO and its own expression. In the presence of copper, RicR dissociates from DNA, leading to the expression of the target genes. Members of the RicR regulon are important for copper resistance during infections and full virulence in a mouse model of infection.</text>
</comment>
<comment type="subcellular location">
    <subcellularLocation>
        <location evidence="5">Cytoplasm</location>
    </subcellularLocation>
</comment>
<comment type="induction">
    <text evidence="2">Negatively autoregulated. Induced by copper.</text>
</comment>
<comment type="disruption phenotype">
    <text evidence="2">Disruption of the gene results in the constitutive expression of the entire RicR regulon and hyper-resistance of the cell to copper.</text>
</comment>
<comment type="miscellaneous">
    <text evidence="3">Constitutive repression of the RicR regulon by a 'copper-blind' RicR results in extreme copper sensitivity in vitro and attenuation of virulence in mice.</text>
</comment>
<comment type="similarity">
    <text evidence="5">Belongs to the CsoR family.</text>
</comment>
<name>RICR_MYCTU</name>